<protein>
    <recommendedName>
        <fullName>Tetracycline resistance protein TetS</fullName>
        <shortName>Tet(S)</shortName>
    </recommendedName>
</protein>
<reference key="1">
    <citation type="journal article" date="1993" name="Gene">
        <title>Characterization of a new class of tetracycline-resistance gene tet(S) in Listeria monocytogenes BM4210.</title>
        <authorList>
            <person name="Charpentier E."/>
            <person name="Gerbaud G."/>
            <person name="Courvalin P."/>
        </authorList>
    </citation>
    <scope>NUCLEOTIDE SEQUENCE [GENOMIC DNA]</scope>
    <source>
        <strain>BM4210</strain>
    </source>
</reference>
<sequence>MKIINIGILAHVDAGKTTLTESLLYSSGAIKELGSVDSGTTKTDTMFLERQRGITIQTAITSFQRENVKVNIVDTPGHMDFLADVYRSLSVLDGAILLISAKDGVQSQTRILFHALRKMNIPIIFFINKIDQNGINLPDVYQDIKDKLSDDIIIKQTVNLNLKPYVIDYTEPEQWETVIVGNDYLLEKYTIGKTLNIAELEKEENERIQSCSLYPVYHGSAKNNIGIKQLIEVITSKLFSPTQLNSDKLCGNVFKVEYSDDGQRLVYVRLYSGTLHLRDSVNISEKEKIKVTEMYTSINGELRQIDKAEPGEIIILKNELLKLNNVLGDKKRLPHREILENPLPMLQTTIEPCKSVQREKLLDALFEISDSDPLLQYYVDTVTHEIVLSFLGEVQMEVTCTLIQEKYHIEIETRKPTVIYMERPLKKSEFTIDIEVPPNPFWASIGLSVTPLPLGSGIQYESLVSLGYLNQSFQNAVMEGIRYGCEQGLYGWKLTDCKICFKYGLYYSPVSTPADFRMLAPIVLEQAFRKSGTELLEPYLSFEIYVPQEYLSRAYNDASKYCANILNTKLKGNEVILIGEIPARCIQEYRNSLTFFTNGRSVCLTELKGYQVTNIKSAFQPRRPNNRIDKVRHMFNKINLH</sequence>
<organism>
    <name type="scientific">Listeria monocytogenes</name>
    <dbReference type="NCBI Taxonomy" id="1639"/>
    <lineage>
        <taxon>Bacteria</taxon>
        <taxon>Bacillati</taxon>
        <taxon>Bacillota</taxon>
        <taxon>Bacilli</taxon>
        <taxon>Bacillales</taxon>
        <taxon>Listeriaceae</taxon>
        <taxon>Listeria</taxon>
    </lineage>
</organism>
<name>TETS_LISMN</name>
<comment type="function">
    <text>Abolishes the inhibitory effect of tetracyclin on protein synthesis by a non-covalent modification of the ribosomes.</text>
</comment>
<comment type="similarity">
    <text evidence="2">Belongs to the TRAFAC class translation factor GTPase superfamily. Classic translation factor GTPase family. TetM/TetO subfamily.</text>
</comment>
<accession>Q48791</accession>
<evidence type="ECO:0000250" key="1"/>
<evidence type="ECO:0000255" key="2">
    <source>
        <dbReference type="PROSITE-ProRule" id="PRU01059"/>
    </source>
</evidence>
<dbReference type="EMBL" id="L09756">
    <property type="protein sequence ID" value="AAA25293.1"/>
    <property type="molecule type" value="Genomic_DNA"/>
</dbReference>
<dbReference type="PIR" id="JN0800">
    <property type="entry name" value="JN0800"/>
</dbReference>
<dbReference type="RefSeq" id="WP_000691722.1">
    <property type="nucleotide sequence ID" value="NG_048273.1"/>
</dbReference>
<dbReference type="SMR" id="Q48791"/>
<dbReference type="CARD" id="ARO:3000192">
    <property type="molecule name" value="tet(S)"/>
    <property type="mechanism identifier" value="ARO:0001003"/>
    <property type="mechanism name" value="antibiotic target protection"/>
</dbReference>
<dbReference type="KEGG" id="ag:AAA25293"/>
<dbReference type="GO" id="GO:0005525">
    <property type="term" value="F:GTP binding"/>
    <property type="evidence" value="ECO:0007669"/>
    <property type="project" value="UniProtKB-KW"/>
</dbReference>
<dbReference type="GO" id="GO:0003924">
    <property type="term" value="F:GTPase activity"/>
    <property type="evidence" value="ECO:0007669"/>
    <property type="project" value="InterPro"/>
</dbReference>
<dbReference type="GO" id="GO:0046677">
    <property type="term" value="P:response to antibiotic"/>
    <property type="evidence" value="ECO:0007669"/>
    <property type="project" value="UniProtKB-KW"/>
</dbReference>
<dbReference type="GO" id="GO:0032790">
    <property type="term" value="P:ribosome disassembly"/>
    <property type="evidence" value="ECO:0007669"/>
    <property type="project" value="TreeGrafter"/>
</dbReference>
<dbReference type="GO" id="GO:0006412">
    <property type="term" value="P:translation"/>
    <property type="evidence" value="ECO:0007669"/>
    <property type="project" value="UniProtKB-KW"/>
</dbReference>
<dbReference type="CDD" id="cd03711">
    <property type="entry name" value="Tet_C"/>
    <property type="match status" value="1"/>
</dbReference>
<dbReference type="CDD" id="cd03690">
    <property type="entry name" value="Tet_II"/>
    <property type="match status" value="1"/>
</dbReference>
<dbReference type="CDD" id="cd16258">
    <property type="entry name" value="Tet_III"/>
    <property type="match status" value="1"/>
</dbReference>
<dbReference type="CDD" id="cd01684">
    <property type="entry name" value="Tet_like_IV"/>
    <property type="match status" value="1"/>
</dbReference>
<dbReference type="CDD" id="cd04168">
    <property type="entry name" value="TetM_like"/>
    <property type="match status" value="1"/>
</dbReference>
<dbReference type="Gene3D" id="3.30.230.10">
    <property type="match status" value="1"/>
</dbReference>
<dbReference type="Gene3D" id="3.30.70.240">
    <property type="match status" value="1"/>
</dbReference>
<dbReference type="Gene3D" id="3.30.70.870">
    <property type="entry name" value="Elongation Factor G (Translational Gtpase), domain 3"/>
    <property type="match status" value="1"/>
</dbReference>
<dbReference type="Gene3D" id="3.40.50.300">
    <property type="entry name" value="P-loop containing nucleotide triphosphate hydrolases"/>
    <property type="match status" value="1"/>
</dbReference>
<dbReference type="Gene3D" id="2.40.30.10">
    <property type="entry name" value="Translation factors"/>
    <property type="match status" value="1"/>
</dbReference>
<dbReference type="InterPro" id="IPR053905">
    <property type="entry name" value="EF-G-like_DII"/>
</dbReference>
<dbReference type="InterPro" id="IPR041095">
    <property type="entry name" value="EFG_II"/>
</dbReference>
<dbReference type="InterPro" id="IPR035647">
    <property type="entry name" value="EFG_III/V"/>
</dbReference>
<dbReference type="InterPro" id="IPR000640">
    <property type="entry name" value="EFG_V-like"/>
</dbReference>
<dbReference type="InterPro" id="IPR031157">
    <property type="entry name" value="G_TR_CS"/>
</dbReference>
<dbReference type="InterPro" id="IPR027417">
    <property type="entry name" value="P-loop_NTPase"/>
</dbReference>
<dbReference type="InterPro" id="IPR020568">
    <property type="entry name" value="Ribosomal_Su5_D2-typ_SF"/>
</dbReference>
<dbReference type="InterPro" id="IPR014721">
    <property type="entry name" value="Ribsml_uS5_D2-typ_fold_subgr"/>
</dbReference>
<dbReference type="InterPro" id="IPR005225">
    <property type="entry name" value="Small_GTP-bd"/>
</dbReference>
<dbReference type="InterPro" id="IPR000795">
    <property type="entry name" value="T_Tr_GTP-bd_dom"/>
</dbReference>
<dbReference type="InterPro" id="IPR035650">
    <property type="entry name" value="Tet_C"/>
</dbReference>
<dbReference type="InterPro" id="IPR009000">
    <property type="entry name" value="Transl_B-barrel_sf"/>
</dbReference>
<dbReference type="InterPro" id="IPR005517">
    <property type="entry name" value="Transl_elong_EFG/EF2_IV"/>
</dbReference>
<dbReference type="NCBIfam" id="TIGR00231">
    <property type="entry name" value="small_GTP"/>
    <property type="match status" value="1"/>
</dbReference>
<dbReference type="NCBIfam" id="NF012153">
    <property type="entry name" value="tet_protect"/>
    <property type="match status" value="1"/>
</dbReference>
<dbReference type="NCBIfam" id="NF033148">
    <property type="entry name" value="tet_protect_M_W"/>
    <property type="match status" value="1"/>
</dbReference>
<dbReference type="PANTHER" id="PTHR43261:SF1">
    <property type="entry name" value="RIBOSOME-RELEASING FACTOR 2, MITOCHONDRIAL"/>
    <property type="match status" value="1"/>
</dbReference>
<dbReference type="PANTHER" id="PTHR43261">
    <property type="entry name" value="TRANSLATION ELONGATION FACTOR G-RELATED"/>
    <property type="match status" value="1"/>
</dbReference>
<dbReference type="Pfam" id="PF22042">
    <property type="entry name" value="EF-G_D2"/>
    <property type="match status" value="1"/>
</dbReference>
<dbReference type="Pfam" id="PF00679">
    <property type="entry name" value="EFG_C"/>
    <property type="match status" value="1"/>
</dbReference>
<dbReference type="Pfam" id="PF14492">
    <property type="entry name" value="EFG_III"/>
    <property type="match status" value="1"/>
</dbReference>
<dbReference type="Pfam" id="PF03764">
    <property type="entry name" value="EFG_IV"/>
    <property type="match status" value="1"/>
</dbReference>
<dbReference type="Pfam" id="PF00009">
    <property type="entry name" value="GTP_EFTU"/>
    <property type="match status" value="1"/>
</dbReference>
<dbReference type="PRINTS" id="PR00315">
    <property type="entry name" value="ELONGATNFCT"/>
</dbReference>
<dbReference type="PRINTS" id="PR01037">
    <property type="entry name" value="TCRTETOQM"/>
</dbReference>
<dbReference type="SMART" id="SM00838">
    <property type="entry name" value="EFG_C"/>
    <property type="match status" value="1"/>
</dbReference>
<dbReference type="SMART" id="SM00889">
    <property type="entry name" value="EFG_IV"/>
    <property type="match status" value="1"/>
</dbReference>
<dbReference type="SUPFAM" id="SSF54980">
    <property type="entry name" value="EF-G C-terminal domain-like"/>
    <property type="match status" value="2"/>
</dbReference>
<dbReference type="SUPFAM" id="SSF52540">
    <property type="entry name" value="P-loop containing nucleoside triphosphate hydrolases"/>
    <property type="match status" value="1"/>
</dbReference>
<dbReference type="SUPFAM" id="SSF54211">
    <property type="entry name" value="Ribosomal protein S5 domain 2-like"/>
    <property type="match status" value="1"/>
</dbReference>
<dbReference type="SUPFAM" id="SSF50447">
    <property type="entry name" value="Translation proteins"/>
    <property type="match status" value="1"/>
</dbReference>
<dbReference type="PROSITE" id="PS00301">
    <property type="entry name" value="G_TR_1"/>
    <property type="match status" value="1"/>
</dbReference>
<dbReference type="PROSITE" id="PS51722">
    <property type="entry name" value="G_TR_2"/>
    <property type="match status" value="1"/>
</dbReference>
<gene>
    <name type="primary">tetS</name>
    <name type="synonym">tet(S)</name>
</gene>
<keyword id="KW-0046">Antibiotic resistance</keyword>
<keyword id="KW-0342">GTP-binding</keyword>
<keyword id="KW-0547">Nucleotide-binding</keyword>
<keyword id="KW-0614">Plasmid</keyword>
<keyword id="KW-0648">Protein biosynthesis</keyword>
<geneLocation type="plasmid">
    <name>pIP811</name>
</geneLocation>
<feature type="chain" id="PRO_0000091515" description="Tetracycline resistance protein TetS">
    <location>
        <begin position="1"/>
        <end position="641"/>
    </location>
</feature>
<feature type="domain" description="tr-type G" evidence="2">
    <location>
        <begin position="1"/>
        <end position="242"/>
    </location>
</feature>
<feature type="binding site" evidence="1">
    <location>
        <begin position="10"/>
        <end position="17"/>
    </location>
    <ligand>
        <name>GTP</name>
        <dbReference type="ChEBI" id="CHEBI:37565"/>
    </ligand>
</feature>
<feature type="binding site" evidence="1">
    <location>
        <begin position="74"/>
        <end position="78"/>
    </location>
    <ligand>
        <name>GTP</name>
        <dbReference type="ChEBI" id="CHEBI:37565"/>
    </ligand>
</feature>
<feature type="binding site" evidence="1">
    <location>
        <begin position="128"/>
        <end position="131"/>
    </location>
    <ligand>
        <name>GTP</name>
        <dbReference type="ChEBI" id="CHEBI:37565"/>
    </ligand>
</feature>
<proteinExistence type="inferred from homology"/>